<name>PRSA_STAAC</name>
<organism>
    <name type="scientific">Staphylococcus aureus (strain COL)</name>
    <dbReference type="NCBI Taxonomy" id="93062"/>
    <lineage>
        <taxon>Bacteria</taxon>
        <taxon>Bacillati</taxon>
        <taxon>Bacillota</taxon>
        <taxon>Bacilli</taxon>
        <taxon>Bacillales</taxon>
        <taxon>Staphylococcaceae</taxon>
        <taxon>Staphylococcus</taxon>
    </lineage>
</organism>
<proteinExistence type="inferred from homology"/>
<feature type="signal peptide" evidence="1">
    <location>
        <begin position="1"/>
        <end position="20"/>
    </location>
</feature>
<feature type="chain" id="PRO_0000042939" description="Foldase protein PrsA">
    <location>
        <begin position="21"/>
        <end position="320"/>
    </location>
</feature>
<feature type="domain" description="PpiC" evidence="1">
    <location>
        <begin position="139"/>
        <end position="245"/>
    </location>
</feature>
<feature type="region of interest" description="Disordered" evidence="2">
    <location>
        <begin position="159"/>
        <end position="198"/>
    </location>
</feature>
<feature type="lipid moiety-binding region" description="N-palmitoyl cysteine" evidence="1">
    <location>
        <position position="21"/>
    </location>
</feature>
<feature type="lipid moiety-binding region" description="S-diacylglycerol cysteine" evidence="1">
    <location>
        <position position="21"/>
    </location>
</feature>
<reference key="1">
    <citation type="journal article" date="2005" name="J. Bacteriol.">
        <title>Insights on evolution of virulence and resistance from the complete genome analysis of an early methicillin-resistant Staphylococcus aureus strain and a biofilm-producing methicillin-resistant Staphylococcus epidermidis strain.</title>
        <authorList>
            <person name="Gill S.R."/>
            <person name="Fouts D.E."/>
            <person name="Archer G.L."/>
            <person name="Mongodin E.F."/>
            <person name="DeBoy R.T."/>
            <person name="Ravel J."/>
            <person name="Paulsen I.T."/>
            <person name="Kolonay J.F."/>
            <person name="Brinkac L.M."/>
            <person name="Beanan M.J."/>
            <person name="Dodson R.J."/>
            <person name="Daugherty S.C."/>
            <person name="Madupu R."/>
            <person name="Angiuoli S.V."/>
            <person name="Durkin A.S."/>
            <person name="Haft D.H."/>
            <person name="Vamathevan J.J."/>
            <person name="Khouri H."/>
            <person name="Utterback T.R."/>
            <person name="Lee C."/>
            <person name="Dimitrov G."/>
            <person name="Jiang L."/>
            <person name="Qin H."/>
            <person name="Weidman J."/>
            <person name="Tran K."/>
            <person name="Kang K.H."/>
            <person name="Hance I.R."/>
            <person name="Nelson K.E."/>
            <person name="Fraser C.M."/>
        </authorList>
    </citation>
    <scope>NUCLEOTIDE SEQUENCE [LARGE SCALE GENOMIC DNA]</scope>
    <source>
        <strain>COL</strain>
    </source>
</reference>
<protein>
    <recommendedName>
        <fullName evidence="1">Foldase protein PrsA</fullName>
        <ecNumber evidence="1">5.2.1.8</ecNumber>
    </recommendedName>
</protein>
<evidence type="ECO:0000255" key="1">
    <source>
        <dbReference type="HAMAP-Rule" id="MF_01145"/>
    </source>
</evidence>
<evidence type="ECO:0000256" key="2">
    <source>
        <dbReference type="SAM" id="MobiDB-lite"/>
    </source>
</evidence>
<accession>Q5HET4</accession>
<keyword id="KW-1003">Cell membrane</keyword>
<keyword id="KW-0413">Isomerase</keyword>
<keyword id="KW-0449">Lipoprotein</keyword>
<keyword id="KW-0472">Membrane</keyword>
<keyword id="KW-0564">Palmitate</keyword>
<keyword id="KW-0697">Rotamase</keyword>
<keyword id="KW-0732">Signal</keyword>
<gene>
    <name evidence="1" type="primary">prsA</name>
    <name type="ordered locus">SACOL1897</name>
</gene>
<comment type="function">
    <text evidence="1">Plays a major role in protein secretion by helping the post-translocational extracellular folding of several secreted proteins.</text>
</comment>
<comment type="catalytic activity">
    <reaction evidence="1">
        <text>[protein]-peptidylproline (omega=180) = [protein]-peptidylproline (omega=0)</text>
        <dbReference type="Rhea" id="RHEA:16237"/>
        <dbReference type="Rhea" id="RHEA-COMP:10747"/>
        <dbReference type="Rhea" id="RHEA-COMP:10748"/>
        <dbReference type="ChEBI" id="CHEBI:83833"/>
        <dbReference type="ChEBI" id="CHEBI:83834"/>
        <dbReference type="EC" id="5.2.1.8"/>
    </reaction>
</comment>
<comment type="subcellular location">
    <subcellularLocation>
        <location evidence="1">Cell membrane</location>
        <topology evidence="1">Lipid-anchor</topology>
    </subcellularLocation>
</comment>
<comment type="similarity">
    <text evidence="1">Belongs to the PrsA family.</text>
</comment>
<dbReference type="EC" id="5.2.1.8" evidence="1"/>
<dbReference type="EMBL" id="CP000046">
    <property type="protein sequence ID" value="AAW36910.1"/>
    <property type="molecule type" value="Genomic_DNA"/>
</dbReference>
<dbReference type="RefSeq" id="WP_000782121.1">
    <property type="nucleotide sequence ID" value="NZ_JBGOFO010000011.1"/>
</dbReference>
<dbReference type="SMR" id="Q5HET4"/>
<dbReference type="KEGG" id="sac:SACOL1897"/>
<dbReference type="HOGENOM" id="CLU_034646_6_2_9"/>
<dbReference type="Proteomes" id="UP000000530">
    <property type="component" value="Chromosome"/>
</dbReference>
<dbReference type="GO" id="GO:0005886">
    <property type="term" value="C:plasma membrane"/>
    <property type="evidence" value="ECO:0007669"/>
    <property type="project" value="UniProtKB-SubCell"/>
</dbReference>
<dbReference type="GO" id="GO:0003755">
    <property type="term" value="F:peptidyl-prolyl cis-trans isomerase activity"/>
    <property type="evidence" value="ECO:0007669"/>
    <property type="project" value="UniProtKB-UniRule"/>
</dbReference>
<dbReference type="GO" id="GO:0006457">
    <property type="term" value="P:protein folding"/>
    <property type="evidence" value="ECO:0007669"/>
    <property type="project" value="UniProtKB-UniRule"/>
</dbReference>
<dbReference type="Gene3D" id="3.10.50.40">
    <property type="match status" value="1"/>
</dbReference>
<dbReference type="Gene3D" id="1.10.4030.10">
    <property type="entry name" value="Porin chaperone SurA, peptide-binding domain"/>
    <property type="match status" value="1"/>
</dbReference>
<dbReference type="HAMAP" id="MF_01145">
    <property type="entry name" value="Foldase_PrsA"/>
    <property type="match status" value="1"/>
</dbReference>
<dbReference type="InterPro" id="IPR023059">
    <property type="entry name" value="Foldase_PrsA"/>
</dbReference>
<dbReference type="InterPro" id="IPR046357">
    <property type="entry name" value="PPIase_dom_sf"/>
</dbReference>
<dbReference type="InterPro" id="IPR000297">
    <property type="entry name" value="PPIase_PpiC"/>
</dbReference>
<dbReference type="InterPro" id="IPR050245">
    <property type="entry name" value="PrsA_foldase"/>
</dbReference>
<dbReference type="InterPro" id="IPR027304">
    <property type="entry name" value="Trigger_fact/SurA_dom_sf"/>
</dbReference>
<dbReference type="PANTHER" id="PTHR47245:SF1">
    <property type="entry name" value="FOLDASE PROTEIN PRSA"/>
    <property type="match status" value="1"/>
</dbReference>
<dbReference type="PANTHER" id="PTHR47245">
    <property type="entry name" value="PEPTIDYLPROLYL ISOMERASE"/>
    <property type="match status" value="1"/>
</dbReference>
<dbReference type="Pfam" id="PF00639">
    <property type="entry name" value="Rotamase"/>
    <property type="match status" value="1"/>
</dbReference>
<dbReference type="SUPFAM" id="SSF54534">
    <property type="entry name" value="FKBP-like"/>
    <property type="match status" value="1"/>
</dbReference>
<dbReference type="SUPFAM" id="SSF109998">
    <property type="entry name" value="Triger factor/SurA peptide-binding domain-like"/>
    <property type="match status" value="1"/>
</dbReference>
<dbReference type="PROSITE" id="PS50198">
    <property type="entry name" value="PPIC_PPIASE_2"/>
    <property type="match status" value="1"/>
</dbReference>
<dbReference type="PROSITE" id="PS51257">
    <property type="entry name" value="PROKAR_LIPOPROTEIN"/>
    <property type="match status" value="1"/>
</dbReference>
<sequence>MKMINKLIVPVTASALLLGACGASATDSKENTLISSKAGDVTVADTMKKIGKDQIANASFTEMLNKILADKYKNKVNDKKIDEQIEKMQKQYGGKDKFEKALQQQGLTADKYKENLRTAAYHKELLSDKIKISDSEIKEDSKKASHILIKVKSKKSDKEGLDDKEAKQKAEEIQKEVSKDPSKFGEIAKKESMDTGSAKKDGELGYVLKGQTDKDFEKALFKLKDGEVSEVVKSSFGYHIIKADKPTDFNSEKQSLKEKLVDQKVQKNPKLLTDAYKDLLKEYDVDFKDRDIKSVVEDKILNPEKLKQGGAQGGQSGMSQ</sequence>